<gene>
    <name type="primary">splB</name>
    <name type="ordered locus">USA300HOU_1805</name>
</gene>
<comment type="function">
    <text evidence="1">Serine protease that cleaves specifically after the sequence Trp-Glu-Leu-Gln.</text>
</comment>
<comment type="subcellular location">
    <subcellularLocation>
        <location evidence="1">Secreted</location>
    </subcellularLocation>
</comment>
<comment type="similarity">
    <text evidence="3">Belongs to the peptidase S1B family.</text>
</comment>
<accession>A8Z4N8</accession>
<dbReference type="EC" id="3.4.21.-"/>
<dbReference type="EMBL" id="CP000730">
    <property type="protein sequence ID" value="ABX29808.1"/>
    <property type="molecule type" value="Genomic_DNA"/>
</dbReference>
<dbReference type="RefSeq" id="WP_001039447.1">
    <property type="nucleotide sequence ID" value="NC_010079.1"/>
</dbReference>
<dbReference type="SMR" id="A8Z4N8"/>
<dbReference type="MEROPS" id="S01.282"/>
<dbReference type="KEGG" id="sax:USA300HOU_1805"/>
<dbReference type="HOGENOM" id="CLU_073589_2_0_9"/>
<dbReference type="GO" id="GO:0005576">
    <property type="term" value="C:extracellular region"/>
    <property type="evidence" value="ECO:0007669"/>
    <property type="project" value="UniProtKB-SubCell"/>
</dbReference>
<dbReference type="GO" id="GO:0004252">
    <property type="term" value="F:serine-type endopeptidase activity"/>
    <property type="evidence" value="ECO:0007669"/>
    <property type="project" value="InterPro"/>
</dbReference>
<dbReference type="GO" id="GO:0006508">
    <property type="term" value="P:proteolysis"/>
    <property type="evidence" value="ECO:0007669"/>
    <property type="project" value="UniProtKB-KW"/>
</dbReference>
<dbReference type="Gene3D" id="2.40.10.10">
    <property type="entry name" value="Trypsin-like serine proteases"/>
    <property type="match status" value="2"/>
</dbReference>
<dbReference type="InterPro" id="IPR009003">
    <property type="entry name" value="Peptidase_S1_PA"/>
</dbReference>
<dbReference type="InterPro" id="IPR043504">
    <property type="entry name" value="Peptidase_S1_PA_chymotrypsin"/>
</dbReference>
<dbReference type="InterPro" id="IPR008256">
    <property type="entry name" value="Peptidase_S1B"/>
</dbReference>
<dbReference type="InterPro" id="IPR008353">
    <property type="entry name" value="Peptidase_S1B_tx"/>
</dbReference>
<dbReference type="InterPro" id="IPR001254">
    <property type="entry name" value="Trypsin_dom"/>
</dbReference>
<dbReference type="InterPro" id="IPR028301">
    <property type="entry name" value="V8_his_AS"/>
</dbReference>
<dbReference type="PANTHER" id="PTHR43019:SF23">
    <property type="entry name" value="PROTEASE DO-LIKE 5, CHLOROPLASTIC"/>
    <property type="match status" value="1"/>
</dbReference>
<dbReference type="PANTHER" id="PTHR43019">
    <property type="entry name" value="SERINE ENDOPROTEASE DEGS"/>
    <property type="match status" value="1"/>
</dbReference>
<dbReference type="Pfam" id="PF00089">
    <property type="entry name" value="Trypsin"/>
    <property type="match status" value="1"/>
</dbReference>
<dbReference type="PRINTS" id="PR01774">
    <property type="entry name" value="EXFOLTOXIN"/>
</dbReference>
<dbReference type="PRINTS" id="PR00839">
    <property type="entry name" value="V8PROTEASE"/>
</dbReference>
<dbReference type="SUPFAM" id="SSF50494">
    <property type="entry name" value="Trypsin-like serine proteases"/>
    <property type="match status" value="1"/>
</dbReference>
<dbReference type="PROSITE" id="PS00672">
    <property type="entry name" value="V8_HIS"/>
    <property type="match status" value="1"/>
</dbReference>
<proteinExistence type="inferred from homology"/>
<evidence type="ECO:0000250" key="1"/>
<evidence type="ECO:0000250" key="2">
    <source>
        <dbReference type="UniProtKB" id="Q2FXC3"/>
    </source>
</evidence>
<evidence type="ECO:0000305" key="3"/>
<reference key="1">
    <citation type="journal article" date="2007" name="BMC Microbiol.">
        <title>Subtle genetic changes enhance virulence of methicillin resistant and sensitive Staphylococcus aureus.</title>
        <authorList>
            <person name="Highlander S.K."/>
            <person name="Hulten K.G."/>
            <person name="Qin X."/>
            <person name="Jiang H."/>
            <person name="Yerrapragada S."/>
            <person name="Mason E.O. Jr."/>
            <person name="Shang Y."/>
            <person name="Williams T.M."/>
            <person name="Fortunov R.M."/>
            <person name="Liu Y."/>
            <person name="Igboeli O."/>
            <person name="Petrosino J."/>
            <person name="Tirumalai M."/>
            <person name="Uzman A."/>
            <person name="Fox G.E."/>
            <person name="Cardenas A.M."/>
            <person name="Muzny D.M."/>
            <person name="Hemphill L."/>
            <person name="Ding Y."/>
            <person name="Dugan S."/>
            <person name="Blyth P.R."/>
            <person name="Buhay C.J."/>
            <person name="Dinh H.H."/>
            <person name="Hawes A.C."/>
            <person name="Holder M."/>
            <person name="Kovar C.L."/>
            <person name="Lee S.L."/>
            <person name="Liu W."/>
            <person name="Nazareth L.V."/>
            <person name="Wang Q."/>
            <person name="Zhou J."/>
            <person name="Kaplan S.L."/>
            <person name="Weinstock G.M."/>
        </authorList>
    </citation>
    <scope>NUCLEOTIDE SEQUENCE [LARGE SCALE GENOMIC DNA]</scope>
    <source>
        <strain>USA300 / TCH1516</strain>
    </source>
</reference>
<protein>
    <recommendedName>
        <fullName>Serine protease SplB</fullName>
        <ecNumber>3.4.21.-</ecNumber>
    </recommendedName>
</protein>
<organism>
    <name type="scientific">Staphylococcus aureus (strain USA300 / TCH1516)</name>
    <dbReference type="NCBI Taxonomy" id="451516"/>
    <lineage>
        <taxon>Bacteria</taxon>
        <taxon>Bacillati</taxon>
        <taxon>Bacillota</taxon>
        <taxon>Bacilli</taxon>
        <taxon>Bacillales</taxon>
        <taxon>Staphylococcaceae</taxon>
        <taxon>Staphylococcus</taxon>
    </lineage>
</organism>
<sequence>MNKNVVIKSLAALTILTSVTGIGTTLVEEVQQTAKAENNVTKVKDTNIFPYTGVVAFKSATGFVVGKNTILTNKHVSKNYKVGDRITAHPNSDKGNGGIYSIKKIINYPGKEDVSVIQVEERAIERGPKGFNFNDNVTPFKYAAGAKAGERIKVIGYPHPYKNKYVLYESTGPVMSVEGSSIVYSAHTESGNSGSPVLNSNNELVGIHFASDVKNDDNRNAYGVYFTPEIKKFIAENIDK</sequence>
<feature type="signal peptide" evidence="1">
    <location>
        <begin position="1"/>
        <end position="36"/>
    </location>
</feature>
<feature type="chain" id="PRO_0000359549" description="Serine protease SplB">
    <location>
        <begin position="37"/>
        <end position="240"/>
    </location>
</feature>
<feature type="active site" description="Charge relay system" evidence="2">
    <location>
        <position position="75"/>
    </location>
</feature>
<feature type="active site" description="Charge relay system" evidence="2">
    <location>
        <position position="113"/>
    </location>
</feature>
<feature type="active site" description="Charge relay system" evidence="2">
    <location>
        <position position="193"/>
    </location>
</feature>
<keyword id="KW-0378">Hydrolase</keyword>
<keyword id="KW-0645">Protease</keyword>
<keyword id="KW-0964">Secreted</keyword>
<keyword id="KW-0720">Serine protease</keyword>
<keyword id="KW-0732">Signal</keyword>
<name>SPLB_STAAT</name>